<evidence type="ECO:0000250" key="1">
    <source>
        <dbReference type="UniProtKB" id="O23264"/>
    </source>
</evidence>
<evidence type="ECO:0000269" key="2">
    <source>
    </source>
</evidence>
<evidence type="ECO:0000305" key="3"/>
<name>SEBP3_ARATH</name>
<organism>
    <name type="scientific">Arabidopsis thaliana</name>
    <name type="common">Mouse-ear cress</name>
    <dbReference type="NCBI Taxonomy" id="3702"/>
    <lineage>
        <taxon>Eukaryota</taxon>
        <taxon>Viridiplantae</taxon>
        <taxon>Streptophyta</taxon>
        <taxon>Embryophyta</taxon>
        <taxon>Tracheophyta</taxon>
        <taxon>Spermatophyta</taxon>
        <taxon>Magnoliopsida</taxon>
        <taxon>eudicotyledons</taxon>
        <taxon>Gunneridae</taxon>
        <taxon>Pentapetalae</taxon>
        <taxon>rosids</taxon>
        <taxon>malvids</taxon>
        <taxon>Brassicales</taxon>
        <taxon>Brassicaceae</taxon>
        <taxon>Camelineae</taxon>
        <taxon>Arabidopsis</taxon>
    </lineage>
</organism>
<sequence>MEAAMNNHDGDCCKSGPGYATPLLAMSGPREKLIYVAAIYTGTGQAKPDYLATVDVEPSSSTYSSVIHRLPMPYLEDELHHSGWNSCSSCYGDSSCERRYLILPSLLSGRIYVIDTKTNPREPSLHKFVDPAEVLEKTGLAYPHQPHCLASGDVLVSCLGDEDGNAEGSGFLLLDSEFNIKGRWEKDGNSPLYGYDFWYQPRHKTMISTSWGAPAAFTKGFDLKDVSDGLYGKHLHVYSWPQGELKQILDLGDTGLLPLEVRFLHEPDKATGFAGCALSSTLVRFFKNDDETWSHEVAISVEPLKVENWILPEMPGLITDFLISLDDRFLYCSNWLHGDIRQYNIEDPKTPVLTGQIHVGGLVQKGSLVLALGEEGKAFQFDVPKIKGQRLRGGPQMFQLSLDGKRLYVTNSLFSVWDRQFYPELVEKGSHMLQIDVDTDKGGLSINPNFFVDFGTEPDGPSLAHEMRYPGGDCTSDIWV</sequence>
<dbReference type="EMBL" id="AP000377">
    <property type="protein sequence ID" value="BAB01856.1"/>
    <property type="molecule type" value="Genomic_DNA"/>
</dbReference>
<dbReference type="EMBL" id="CP002686">
    <property type="protein sequence ID" value="AEE76815.1"/>
    <property type="molecule type" value="Genomic_DNA"/>
</dbReference>
<dbReference type="EMBL" id="BT005102">
    <property type="protein sequence ID" value="AAO50635.1"/>
    <property type="molecule type" value="mRNA"/>
</dbReference>
<dbReference type="EMBL" id="AK117618">
    <property type="protein sequence ID" value="BAC42274.1"/>
    <property type="molecule type" value="mRNA"/>
</dbReference>
<dbReference type="RefSeq" id="NP_189022.1">
    <property type="nucleotide sequence ID" value="NM_113284.3"/>
</dbReference>
<dbReference type="SMR" id="Q9LK38"/>
<dbReference type="BioGRID" id="7294">
    <property type="interactions" value="1"/>
</dbReference>
<dbReference type="FunCoup" id="Q9LK38">
    <property type="interactions" value="872"/>
</dbReference>
<dbReference type="STRING" id="3702.Q9LK38"/>
<dbReference type="PaxDb" id="3702-AT3G23800.1"/>
<dbReference type="ProteomicsDB" id="232780"/>
<dbReference type="EnsemblPlants" id="AT3G23800.1">
    <property type="protein sequence ID" value="AT3G23800.1"/>
    <property type="gene ID" value="AT3G23800"/>
</dbReference>
<dbReference type="GeneID" id="821962"/>
<dbReference type="Gramene" id="AT3G23800.1">
    <property type="protein sequence ID" value="AT3G23800.1"/>
    <property type="gene ID" value="AT3G23800"/>
</dbReference>
<dbReference type="KEGG" id="ath:AT3G23800"/>
<dbReference type="Araport" id="AT3G23800"/>
<dbReference type="TAIR" id="AT3G23800">
    <property type="gene designation" value="SBP3"/>
</dbReference>
<dbReference type="eggNOG" id="KOG0918">
    <property type="taxonomic scope" value="Eukaryota"/>
</dbReference>
<dbReference type="HOGENOM" id="CLU_032512_0_0_1"/>
<dbReference type="InParanoid" id="Q9LK38"/>
<dbReference type="OMA" id="GYPHTSH"/>
<dbReference type="PhylomeDB" id="Q9LK38"/>
<dbReference type="PRO" id="PR:Q9LK38"/>
<dbReference type="Proteomes" id="UP000006548">
    <property type="component" value="Chromosome 3"/>
</dbReference>
<dbReference type="ExpressionAtlas" id="Q9LK38">
    <property type="expression patterns" value="baseline and differential"/>
</dbReference>
<dbReference type="GO" id="GO:0008430">
    <property type="term" value="F:selenium binding"/>
    <property type="evidence" value="ECO:0007669"/>
    <property type="project" value="InterPro"/>
</dbReference>
<dbReference type="InterPro" id="IPR008826">
    <property type="entry name" value="Se-bd"/>
</dbReference>
<dbReference type="PANTHER" id="PTHR23300">
    <property type="entry name" value="METHANETHIOL OXIDASE"/>
    <property type="match status" value="1"/>
</dbReference>
<dbReference type="PANTHER" id="PTHR23300:SF0">
    <property type="entry name" value="METHANETHIOL OXIDASE"/>
    <property type="match status" value="1"/>
</dbReference>
<dbReference type="Pfam" id="PF05694">
    <property type="entry name" value="SBP56"/>
    <property type="match status" value="1"/>
</dbReference>
<dbReference type="SUPFAM" id="SSF75011">
    <property type="entry name" value="3-carboxy-cis,cis-mucoante lactonizing enzyme"/>
    <property type="match status" value="1"/>
</dbReference>
<gene>
    <name type="primary">SBP3</name>
    <name type="ordered locus">At3g23800</name>
    <name type="ORF">MYM9.14</name>
</gene>
<feature type="chain" id="PRO_0000403645" description="Selenium-binding protein 3">
    <location>
        <begin position="1"/>
        <end position="480"/>
    </location>
</feature>
<feature type="binding site" evidence="1">
    <location>
        <position position="12"/>
    </location>
    <ligand>
        <name>selenite</name>
        <dbReference type="ChEBI" id="CHEBI:18212"/>
    </ligand>
</feature>
<feature type="binding site" evidence="1">
    <location>
        <position position="13"/>
    </location>
    <ligand>
        <name>selenite</name>
        <dbReference type="ChEBI" id="CHEBI:18212"/>
    </ligand>
</feature>
<comment type="tissue specificity">
    <text evidence="2">Expressed in young seedlings, mostly in roots.</text>
</comment>
<comment type="induction">
    <text evidence="2">Slightly induced in roots by cadmium.</text>
</comment>
<comment type="similarity">
    <text evidence="3">Belongs to the selenium-binding protein family.</text>
</comment>
<proteinExistence type="evidence at transcript level"/>
<protein>
    <recommendedName>
        <fullName>Selenium-binding protein 3</fullName>
    </recommendedName>
</protein>
<reference key="1">
    <citation type="journal article" date="2000" name="DNA Res.">
        <title>Structural analysis of Arabidopsis thaliana chromosome 3. II. Sequence features of the 4,251,695 bp regions covered by 90 P1, TAC and BAC clones.</title>
        <authorList>
            <person name="Kaneko T."/>
            <person name="Katoh T."/>
            <person name="Sato S."/>
            <person name="Nakamura Y."/>
            <person name="Asamizu E."/>
            <person name="Tabata S."/>
        </authorList>
    </citation>
    <scope>NUCLEOTIDE SEQUENCE [LARGE SCALE GENOMIC DNA]</scope>
    <source>
        <strain>cv. Columbia</strain>
    </source>
</reference>
<reference key="2">
    <citation type="journal article" date="2017" name="Plant J.">
        <title>Araport11: a complete reannotation of the Arabidopsis thaliana reference genome.</title>
        <authorList>
            <person name="Cheng C.Y."/>
            <person name="Krishnakumar V."/>
            <person name="Chan A.P."/>
            <person name="Thibaud-Nissen F."/>
            <person name="Schobel S."/>
            <person name="Town C.D."/>
        </authorList>
    </citation>
    <scope>GENOME REANNOTATION</scope>
    <source>
        <strain>cv. Columbia</strain>
    </source>
</reference>
<reference key="3">
    <citation type="journal article" date="2003" name="Science">
        <title>Empirical analysis of transcriptional activity in the Arabidopsis genome.</title>
        <authorList>
            <person name="Yamada K."/>
            <person name="Lim J."/>
            <person name="Dale J.M."/>
            <person name="Chen H."/>
            <person name="Shinn P."/>
            <person name="Palm C.J."/>
            <person name="Southwick A.M."/>
            <person name="Wu H.C."/>
            <person name="Kim C.J."/>
            <person name="Nguyen M."/>
            <person name="Pham P.K."/>
            <person name="Cheuk R.F."/>
            <person name="Karlin-Newmann G."/>
            <person name="Liu S.X."/>
            <person name="Lam B."/>
            <person name="Sakano H."/>
            <person name="Wu T."/>
            <person name="Yu G."/>
            <person name="Miranda M."/>
            <person name="Quach H.L."/>
            <person name="Tripp M."/>
            <person name="Chang C.H."/>
            <person name="Lee J.M."/>
            <person name="Toriumi M.J."/>
            <person name="Chan M.M."/>
            <person name="Tang C.C."/>
            <person name="Onodera C.S."/>
            <person name="Deng J.M."/>
            <person name="Akiyama K."/>
            <person name="Ansari Y."/>
            <person name="Arakawa T."/>
            <person name="Banh J."/>
            <person name="Banno F."/>
            <person name="Bowser L."/>
            <person name="Brooks S.Y."/>
            <person name="Carninci P."/>
            <person name="Chao Q."/>
            <person name="Choy N."/>
            <person name="Enju A."/>
            <person name="Goldsmith A.D."/>
            <person name="Gurjal M."/>
            <person name="Hansen N.F."/>
            <person name="Hayashizaki Y."/>
            <person name="Johnson-Hopson C."/>
            <person name="Hsuan V.W."/>
            <person name="Iida K."/>
            <person name="Karnes M."/>
            <person name="Khan S."/>
            <person name="Koesema E."/>
            <person name="Ishida J."/>
            <person name="Jiang P.X."/>
            <person name="Jones T."/>
            <person name="Kawai J."/>
            <person name="Kamiya A."/>
            <person name="Meyers C."/>
            <person name="Nakajima M."/>
            <person name="Narusaka M."/>
            <person name="Seki M."/>
            <person name="Sakurai T."/>
            <person name="Satou M."/>
            <person name="Tamse R."/>
            <person name="Vaysberg M."/>
            <person name="Wallender E.K."/>
            <person name="Wong C."/>
            <person name="Yamamura Y."/>
            <person name="Yuan S."/>
            <person name="Shinozaki K."/>
            <person name="Davis R.W."/>
            <person name="Theologis A."/>
            <person name="Ecker J.R."/>
        </authorList>
    </citation>
    <scope>NUCLEOTIDE SEQUENCE [LARGE SCALE MRNA]</scope>
    <source>
        <strain>cv. Columbia</strain>
    </source>
</reference>
<reference key="4">
    <citation type="journal article" date="2002" name="Science">
        <title>Functional annotation of a full-length Arabidopsis cDNA collection.</title>
        <authorList>
            <person name="Seki M."/>
            <person name="Narusaka M."/>
            <person name="Kamiya A."/>
            <person name="Ishida J."/>
            <person name="Satou M."/>
            <person name="Sakurai T."/>
            <person name="Nakajima M."/>
            <person name="Enju A."/>
            <person name="Akiyama K."/>
            <person name="Oono Y."/>
            <person name="Muramatsu M."/>
            <person name="Hayashizaki Y."/>
            <person name="Kawai J."/>
            <person name="Carninci P."/>
            <person name="Itoh M."/>
            <person name="Ishii Y."/>
            <person name="Arakawa T."/>
            <person name="Shibata K."/>
            <person name="Shinagawa A."/>
            <person name="Shinozaki K."/>
        </authorList>
    </citation>
    <scope>NUCLEOTIDE SEQUENCE [LARGE SCALE MRNA]</scope>
    <source>
        <strain>cv. Columbia</strain>
    </source>
</reference>
<reference key="5">
    <citation type="journal article" date="2008" name="Plant Physiol.">
        <title>The Arabidopsis putative selenium-binding protein family: expression study and characterization of SBP1 as a potential new player in cadmium detoxification processes.</title>
        <authorList>
            <person name="Dutilleul C."/>
            <person name="Jourdain A."/>
            <person name="Bourguignon J."/>
            <person name="Hugouvieux V."/>
        </authorList>
    </citation>
    <scope>TISSUE SPECIFICITY</scope>
    <scope>INDUCTION BY CADMIUM</scope>
</reference>
<keyword id="KW-1185">Reference proteome</keyword>
<keyword id="KW-0711">Selenium</keyword>
<accession>Q9LK38</accession>